<organism>
    <name type="scientific">Drosophila melanogaster</name>
    <name type="common">Fruit fly</name>
    <dbReference type="NCBI Taxonomy" id="7227"/>
    <lineage>
        <taxon>Eukaryota</taxon>
        <taxon>Metazoa</taxon>
        <taxon>Ecdysozoa</taxon>
        <taxon>Arthropoda</taxon>
        <taxon>Hexapoda</taxon>
        <taxon>Insecta</taxon>
        <taxon>Pterygota</taxon>
        <taxon>Neoptera</taxon>
        <taxon>Endopterygota</taxon>
        <taxon>Diptera</taxon>
        <taxon>Brachycera</taxon>
        <taxon>Muscomorpha</taxon>
        <taxon>Ephydroidea</taxon>
        <taxon>Drosophilidae</taxon>
        <taxon>Drosophila</taxon>
        <taxon>Sophophora</taxon>
    </lineage>
</organism>
<feature type="chain" id="PRO_0000073477" description="Calbindin-32">
    <location>
        <begin position="1"/>
        <end position="310"/>
    </location>
</feature>
<feature type="domain" description="EF-hand 1" evidence="1">
    <location>
        <begin position="35"/>
        <end position="70"/>
    </location>
</feature>
<feature type="domain" description="EF-hand 2" evidence="1">
    <location>
        <begin position="84"/>
        <end position="120"/>
    </location>
</feature>
<feature type="domain" description="EF-hand 3" evidence="1">
    <location>
        <begin position="131"/>
        <end position="166"/>
    </location>
</feature>
<feature type="domain" description="EF-hand 4" evidence="1">
    <location>
        <begin position="177"/>
        <end position="212"/>
    </location>
</feature>
<feature type="domain" description="EF-hand 5" evidence="1">
    <location>
        <begin position="224"/>
        <end position="259"/>
    </location>
</feature>
<feature type="domain" description="EF-hand 6" evidence="1">
    <location>
        <begin position="283"/>
        <end position="304"/>
    </location>
</feature>
<feature type="binding site" evidence="1">
    <location>
        <position position="48"/>
    </location>
    <ligand>
        <name>Ca(2+)</name>
        <dbReference type="ChEBI" id="CHEBI:29108"/>
        <label>1</label>
    </ligand>
</feature>
<feature type="binding site" evidence="1">
    <location>
        <position position="50"/>
    </location>
    <ligand>
        <name>Ca(2+)</name>
        <dbReference type="ChEBI" id="CHEBI:29108"/>
        <label>1</label>
    </ligand>
</feature>
<feature type="binding site" evidence="1">
    <location>
        <position position="52"/>
    </location>
    <ligand>
        <name>Ca(2+)</name>
        <dbReference type="ChEBI" id="CHEBI:29108"/>
        <label>1</label>
    </ligand>
</feature>
<feature type="binding site" evidence="1">
    <location>
        <position position="54"/>
    </location>
    <ligand>
        <name>Ca(2+)</name>
        <dbReference type="ChEBI" id="CHEBI:29108"/>
        <label>1</label>
    </ligand>
</feature>
<feature type="binding site" evidence="1">
    <location>
        <position position="59"/>
    </location>
    <ligand>
        <name>Ca(2+)</name>
        <dbReference type="ChEBI" id="CHEBI:29108"/>
        <label>1</label>
    </ligand>
</feature>
<feature type="binding site" evidence="1">
    <location>
        <position position="98"/>
    </location>
    <ligand>
        <name>Ca(2+)</name>
        <dbReference type="ChEBI" id="CHEBI:29108"/>
        <label>2</label>
    </ligand>
</feature>
<feature type="binding site" evidence="1">
    <location>
        <position position="100"/>
    </location>
    <ligand>
        <name>Ca(2+)</name>
        <dbReference type="ChEBI" id="CHEBI:29108"/>
        <label>2</label>
    </ligand>
</feature>
<feature type="binding site" evidence="1">
    <location>
        <position position="102"/>
    </location>
    <ligand>
        <name>Ca(2+)</name>
        <dbReference type="ChEBI" id="CHEBI:29108"/>
        <label>2</label>
    </ligand>
</feature>
<feature type="binding site" evidence="1">
    <location>
        <position position="104"/>
    </location>
    <ligand>
        <name>Ca(2+)</name>
        <dbReference type="ChEBI" id="CHEBI:29108"/>
        <label>2</label>
    </ligand>
</feature>
<feature type="binding site" evidence="1">
    <location>
        <position position="109"/>
    </location>
    <ligand>
        <name>Ca(2+)</name>
        <dbReference type="ChEBI" id="CHEBI:29108"/>
        <label>2</label>
    </ligand>
</feature>
<feature type="binding site" evidence="1">
    <location>
        <position position="144"/>
    </location>
    <ligand>
        <name>Ca(2+)</name>
        <dbReference type="ChEBI" id="CHEBI:29108"/>
        <label>3</label>
    </ligand>
</feature>
<feature type="binding site" evidence="1">
    <location>
        <position position="146"/>
    </location>
    <ligand>
        <name>Ca(2+)</name>
        <dbReference type="ChEBI" id="CHEBI:29108"/>
        <label>3</label>
    </ligand>
</feature>
<feature type="binding site" evidence="1">
    <location>
        <position position="148"/>
    </location>
    <ligand>
        <name>Ca(2+)</name>
        <dbReference type="ChEBI" id="CHEBI:29108"/>
        <label>3</label>
    </ligand>
</feature>
<feature type="binding site" evidence="1">
    <location>
        <position position="150"/>
    </location>
    <ligand>
        <name>Ca(2+)</name>
        <dbReference type="ChEBI" id="CHEBI:29108"/>
        <label>3</label>
    </ligand>
</feature>
<feature type="binding site" evidence="1">
    <location>
        <position position="155"/>
    </location>
    <ligand>
        <name>Ca(2+)</name>
        <dbReference type="ChEBI" id="CHEBI:29108"/>
        <label>3</label>
    </ligand>
</feature>
<feature type="binding site" evidence="1">
    <location>
        <position position="190"/>
    </location>
    <ligand>
        <name>Ca(2+)</name>
        <dbReference type="ChEBI" id="CHEBI:29108"/>
        <label>4</label>
    </ligand>
</feature>
<feature type="binding site" evidence="1">
    <location>
        <position position="192"/>
    </location>
    <ligand>
        <name>Ca(2+)</name>
        <dbReference type="ChEBI" id="CHEBI:29108"/>
        <label>4</label>
    </ligand>
</feature>
<feature type="binding site" evidence="1">
    <location>
        <position position="194"/>
    </location>
    <ligand>
        <name>Ca(2+)</name>
        <dbReference type="ChEBI" id="CHEBI:29108"/>
        <label>4</label>
    </ligand>
</feature>
<feature type="binding site" evidence="1">
    <location>
        <position position="196"/>
    </location>
    <ligand>
        <name>Ca(2+)</name>
        <dbReference type="ChEBI" id="CHEBI:29108"/>
        <label>4</label>
    </ligand>
</feature>
<feature type="binding site" evidence="1">
    <location>
        <position position="201"/>
    </location>
    <ligand>
        <name>Ca(2+)</name>
        <dbReference type="ChEBI" id="CHEBI:29108"/>
        <label>4</label>
    </ligand>
</feature>
<feature type="binding site" evidence="1">
    <location>
        <position position="237"/>
    </location>
    <ligand>
        <name>Ca(2+)</name>
        <dbReference type="ChEBI" id="CHEBI:29108"/>
        <label>5</label>
    </ligand>
</feature>
<feature type="binding site" evidence="1">
    <location>
        <position position="239"/>
    </location>
    <ligand>
        <name>Ca(2+)</name>
        <dbReference type="ChEBI" id="CHEBI:29108"/>
        <label>5</label>
    </ligand>
</feature>
<feature type="binding site" evidence="1">
    <location>
        <position position="241"/>
    </location>
    <ligand>
        <name>Ca(2+)</name>
        <dbReference type="ChEBI" id="CHEBI:29108"/>
        <label>5</label>
    </ligand>
</feature>
<feature type="binding site" evidence="1">
    <location>
        <position position="243"/>
    </location>
    <ligand>
        <name>Ca(2+)</name>
        <dbReference type="ChEBI" id="CHEBI:29108"/>
        <label>5</label>
    </ligand>
</feature>
<feature type="binding site" evidence="1">
    <location>
        <position position="248"/>
    </location>
    <ligand>
        <name>Ca(2+)</name>
        <dbReference type="ChEBI" id="CHEBI:29108"/>
        <label>5</label>
    </ligand>
</feature>
<keyword id="KW-0106">Calcium</keyword>
<keyword id="KW-0479">Metal-binding</keyword>
<keyword id="KW-1185">Reference proteome</keyword>
<keyword id="KW-0677">Repeat</keyword>
<proteinExistence type="evidence at transcript level"/>
<sequence length="310" mass="35717">MDSAAAAAAKRVQIEKAHNFMRQYRDPESRELKKLSANQFMDVWAHYDKDGNGYIEGTELDGFLREFVSSANATDISPEAVTDTMLEELKSCFMEAYDDNQDGKIDIRELAQLLPMEENFLLLFRFDNPLESSVEFMKIWREYDTDNSGYIEADELKNFLRDLLKEAKKINDVSEDKLIEYTDTMLQVFDANKDGRLQLSEMAKLLPVKENFLCRQVFKGATKLTKEDIEKVFSLYDRDNSGTIENEELKGFLKDLLELVKKDDYDAQDLAAFEETIMRGVGTDKHGKISRKELTMILLTLAKISPDDEE</sequence>
<comment type="tissue specificity">
    <text>Expressed in a large number of neuron of the brain and the thoracic ganglion as well as in two small muscles of the thorax.</text>
</comment>
<comment type="similarity">
    <text evidence="2">Belongs to the calbindin family.</text>
</comment>
<gene>
    <name type="primary">Cbp53E</name>
    <name type="synonym">cbn</name>
    <name type="ORF">CG6702</name>
</gene>
<accession>P41044</accession>
<accession>Q9V7W4</accession>
<dbReference type="EMBL" id="X68566">
    <property type="protein sequence ID" value="CAA48566.1"/>
    <property type="molecule type" value="mRNA"/>
</dbReference>
<dbReference type="EMBL" id="S59242">
    <property type="protein sequence ID" value="AAA15214.1"/>
    <property type="molecule type" value="Unassigned_DNA"/>
</dbReference>
<dbReference type="EMBL" id="S59190">
    <property type="protein sequence ID" value="AAA15214.1"/>
    <property type="status" value="JOINED"/>
    <property type="molecule type" value="Unassigned_DNA"/>
</dbReference>
<dbReference type="EMBL" id="S59191">
    <property type="protein sequence ID" value="AAA15214.1"/>
    <property type="status" value="JOINED"/>
    <property type="molecule type" value="Unassigned_DNA"/>
</dbReference>
<dbReference type="EMBL" id="AE013599">
    <property type="protein sequence ID" value="AAF57925.1"/>
    <property type="molecule type" value="Genomic_DNA"/>
</dbReference>
<dbReference type="EMBL" id="AY058340">
    <property type="protein sequence ID" value="AAL13569.1"/>
    <property type="molecule type" value="mRNA"/>
</dbReference>
<dbReference type="PIR" id="S37695">
    <property type="entry name" value="S37695"/>
</dbReference>
<dbReference type="RefSeq" id="NP_001286511.1">
    <property type="nucleotide sequence ID" value="NM_001299582.1"/>
</dbReference>
<dbReference type="RefSeq" id="NP_476838.1">
    <property type="nucleotide sequence ID" value="NM_057490.4"/>
</dbReference>
<dbReference type="SMR" id="P41044"/>
<dbReference type="BioGRID" id="62607">
    <property type="interactions" value="2"/>
</dbReference>
<dbReference type="FunCoup" id="P41044">
    <property type="interactions" value="49"/>
</dbReference>
<dbReference type="IntAct" id="P41044">
    <property type="interactions" value="3"/>
</dbReference>
<dbReference type="STRING" id="7227.FBpp0086204"/>
<dbReference type="PaxDb" id="7227-FBpp0086204"/>
<dbReference type="DNASU" id="36905"/>
<dbReference type="EnsemblMetazoa" id="FBtr0087056">
    <property type="protein sequence ID" value="FBpp0086204"/>
    <property type="gene ID" value="FBgn0004580"/>
</dbReference>
<dbReference type="EnsemblMetazoa" id="FBtr0340072">
    <property type="protein sequence ID" value="FBpp0309078"/>
    <property type="gene ID" value="FBgn0004580"/>
</dbReference>
<dbReference type="GeneID" id="36905"/>
<dbReference type="KEGG" id="dme:Dmel_CG6702"/>
<dbReference type="AGR" id="FB:FBgn0004580"/>
<dbReference type="CTD" id="36905"/>
<dbReference type="FlyBase" id="FBgn0004580">
    <property type="gene designation" value="Cbp53E"/>
</dbReference>
<dbReference type="VEuPathDB" id="VectorBase:FBgn0004580"/>
<dbReference type="eggNOG" id="KOG0027">
    <property type="taxonomic scope" value="Eukaryota"/>
</dbReference>
<dbReference type="GeneTree" id="ENSGT00950000183108"/>
<dbReference type="HOGENOM" id="CLU_054826_1_0_1"/>
<dbReference type="InParanoid" id="P41044"/>
<dbReference type="OMA" id="IVLCNEP"/>
<dbReference type="OrthoDB" id="428774at2759"/>
<dbReference type="PhylomeDB" id="P41044"/>
<dbReference type="BioGRID-ORCS" id="36905">
    <property type="hits" value="0 hits in 3 CRISPR screens"/>
</dbReference>
<dbReference type="GenomeRNAi" id="36905"/>
<dbReference type="PRO" id="PR:P41044"/>
<dbReference type="Proteomes" id="UP000000803">
    <property type="component" value="Chromosome 2R"/>
</dbReference>
<dbReference type="Bgee" id="FBgn0004580">
    <property type="expression patterns" value="Expressed in medullary intrinsic neuron Mi1 (Drosophila) in brain and 181 other cell types or tissues"/>
</dbReference>
<dbReference type="ExpressionAtlas" id="P41044">
    <property type="expression patterns" value="baseline and differential"/>
</dbReference>
<dbReference type="GO" id="GO:0005829">
    <property type="term" value="C:cytosol"/>
    <property type="evidence" value="ECO:0000318"/>
    <property type="project" value="GO_Central"/>
</dbReference>
<dbReference type="GO" id="GO:0030425">
    <property type="term" value="C:dendrite"/>
    <property type="evidence" value="ECO:0000318"/>
    <property type="project" value="GO_Central"/>
</dbReference>
<dbReference type="GO" id="GO:0005634">
    <property type="term" value="C:nucleus"/>
    <property type="evidence" value="ECO:0000318"/>
    <property type="project" value="GO_Central"/>
</dbReference>
<dbReference type="GO" id="GO:0045202">
    <property type="term" value="C:synapse"/>
    <property type="evidence" value="ECO:0000318"/>
    <property type="project" value="GO_Central"/>
</dbReference>
<dbReference type="GO" id="GO:0043195">
    <property type="term" value="C:terminal bouton"/>
    <property type="evidence" value="ECO:0000318"/>
    <property type="project" value="GO_Central"/>
</dbReference>
<dbReference type="GO" id="GO:0061175">
    <property type="term" value="C:type II terminal bouton"/>
    <property type="evidence" value="ECO:0000314"/>
    <property type="project" value="FlyBase"/>
</dbReference>
<dbReference type="GO" id="GO:0097467">
    <property type="term" value="C:type III terminal bouton"/>
    <property type="evidence" value="ECO:0000314"/>
    <property type="project" value="FlyBase"/>
</dbReference>
<dbReference type="GO" id="GO:0005509">
    <property type="term" value="F:calcium ion binding"/>
    <property type="evidence" value="ECO:0000318"/>
    <property type="project" value="GO_Central"/>
</dbReference>
<dbReference type="CDD" id="cd16179">
    <property type="entry name" value="EFh_HEF_CBN"/>
    <property type="match status" value="1"/>
</dbReference>
<dbReference type="FunFam" id="1.10.238.10:FF:000054">
    <property type="entry name" value="Calbindin 2"/>
    <property type="match status" value="1"/>
</dbReference>
<dbReference type="FunFam" id="1.10.238.10:FF:000262">
    <property type="entry name" value="calbindin-32 isoform X2"/>
    <property type="match status" value="1"/>
</dbReference>
<dbReference type="FunFam" id="1.10.238.10:FF:000304">
    <property type="entry name" value="calbindin-32 isoform X2"/>
    <property type="match status" value="1"/>
</dbReference>
<dbReference type="Gene3D" id="1.10.238.10">
    <property type="entry name" value="EF-hand"/>
    <property type="match status" value="3"/>
</dbReference>
<dbReference type="InterPro" id="IPR051001">
    <property type="entry name" value="Calbindin_Ca-bind"/>
</dbReference>
<dbReference type="InterPro" id="IPR011992">
    <property type="entry name" value="EF-hand-dom_pair"/>
</dbReference>
<dbReference type="InterPro" id="IPR018247">
    <property type="entry name" value="EF_Hand_1_Ca_BS"/>
</dbReference>
<dbReference type="InterPro" id="IPR002048">
    <property type="entry name" value="EF_hand_dom"/>
</dbReference>
<dbReference type="InterPro" id="IPR035799">
    <property type="entry name" value="EFh_CBN"/>
</dbReference>
<dbReference type="PANTHER" id="PTHR19972">
    <property type="entry name" value="CALBINDIN"/>
    <property type="match status" value="1"/>
</dbReference>
<dbReference type="PANTHER" id="PTHR19972:SF10">
    <property type="entry name" value="CALBINDIN-32"/>
    <property type="match status" value="1"/>
</dbReference>
<dbReference type="Pfam" id="PF00036">
    <property type="entry name" value="EF-hand_1"/>
    <property type="match status" value="1"/>
</dbReference>
<dbReference type="Pfam" id="PF13499">
    <property type="entry name" value="EF-hand_7"/>
    <property type="match status" value="2"/>
</dbReference>
<dbReference type="SMART" id="SM00054">
    <property type="entry name" value="EFh"/>
    <property type="match status" value="5"/>
</dbReference>
<dbReference type="SUPFAM" id="SSF47473">
    <property type="entry name" value="EF-hand"/>
    <property type="match status" value="2"/>
</dbReference>
<dbReference type="PROSITE" id="PS00018">
    <property type="entry name" value="EF_HAND_1"/>
    <property type="match status" value="5"/>
</dbReference>
<dbReference type="PROSITE" id="PS50222">
    <property type="entry name" value="EF_HAND_2"/>
    <property type="match status" value="6"/>
</dbReference>
<reference key="1">
    <citation type="journal article" date="1993" name="J. Neurosci.">
        <title>An invertebrate calcium-binding protein of the calbindin subfamily: protein structure, genomic organization, and expression pattern of the calbindin-32 gene of Drosophila.</title>
        <authorList>
            <person name="Reifegerste R."/>
            <person name="Grimm S."/>
            <person name="Albert S."/>
            <person name="Lipski N."/>
            <person name="Heimbeck G."/>
            <person name="Hofbauer A."/>
            <person name="Pflugfelder G.O."/>
            <person name="Quack D."/>
            <person name="Reichmuth C."/>
            <person name="Schug B."/>
            <person name="Zinsmaier K.E."/>
            <person name="Buchner S."/>
            <person name="Buchner E."/>
        </authorList>
    </citation>
    <scope>NUCLEOTIDE SEQUENCE [MRNA]</scope>
    <source>
        <strain>Berlin</strain>
        <tissue>Brain</tissue>
    </source>
</reference>
<reference key="2">
    <citation type="journal article" date="2000" name="Science">
        <title>The genome sequence of Drosophila melanogaster.</title>
        <authorList>
            <person name="Adams M.D."/>
            <person name="Celniker S.E."/>
            <person name="Holt R.A."/>
            <person name="Evans C.A."/>
            <person name="Gocayne J.D."/>
            <person name="Amanatides P.G."/>
            <person name="Scherer S.E."/>
            <person name="Li P.W."/>
            <person name="Hoskins R.A."/>
            <person name="Galle R.F."/>
            <person name="George R.A."/>
            <person name="Lewis S.E."/>
            <person name="Richards S."/>
            <person name="Ashburner M."/>
            <person name="Henderson S.N."/>
            <person name="Sutton G.G."/>
            <person name="Wortman J.R."/>
            <person name="Yandell M.D."/>
            <person name="Zhang Q."/>
            <person name="Chen L.X."/>
            <person name="Brandon R.C."/>
            <person name="Rogers Y.-H.C."/>
            <person name="Blazej R.G."/>
            <person name="Champe M."/>
            <person name="Pfeiffer B.D."/>
            <person name="Wan K.H."/>
            <person name="Doyle C."/>
            <person name="Baxter E.G."/>
            <person name="Helt G."/>
            <person name="Nelson C.R."/>
            <person name="Miklos G.L.G."/>
            <person name="Abril J.F."/>
            <person name="Agbayani A."/>
            <person name="An H.-J."/>
            <person name="Andrews-Pfannkoch C."/>
            <person name="Baldwin D."/>
            <person name="Ballew R.M."/>
            <person name="Basu A."/>
            <person name="Baxendale J."/>
            <person name="Bayraktaroglu L."/>
            <person name="Beasley E.M."/>
            <person name="Beeson K.Y."/>
            <person name="Benos P.V."/>
            <person name="Berman B.P."/>
            <person name="Bhandari D."/>
            <person name="Bolshakov S."/>
            <person name="Borkova D."/>
            <person name="Botchan M.R."/>
            <person name="Bouck J."/>
            <person name="Brokstein P."/>
            <person name="Brottier P."/>
            <person name="Burtis K.C."/>
            <person name="Busam D.A."/>
            <person name="Butler H."/>
            <person name="Cadieu E."/>
            <person name="Center A."/>
            <person name="Chandra I."/>
            <person name="Cherry J.M."/>
            <person name="Cawley S."/>
            <person name="Dahlke C."/>
            <person name="Davenport L.B."/>
            <person name="Davies P."/>
            <person name="de Pablos B."/>
            <person name="Delcher A."/>
            <person name="Deng Z."/>
            <person name="Mays A.D."/>
            <person name="Dew I."/>
            <person name="Dietz S.M."/>
            <person name="Dodson K."/>
            <person name="Doup L.E."/>
            <person name="Downes M."/>
            <person name="Dugan-Rocha S."/>
            <person name="Dunkov B.C."/>
            <person name="Dunn P."/>
            <person name="Durbin K.J."/>
            <person name="Evangelista C.C."/>
            <person name="Ferraz C."/>
            <person name="Ferriera S."/>
            <person name="Fleischmann W."/>
            <person name="Fosler C."/>
            <person name="Gabrielian A.E."/>
            <person name="Garg N.S."/>
            <person name="Gelbart W.M."/>
            <person name="Glasser K."/>
            <person name="Glodek A."/>
            <person name="Gong F."/>
            <person name="Gorrell J.H."/>
            <person name="Gu Z."/>
            <person name="Guan P."/>
            <person name="Harris M."/>
            <person name="Harris N.L."/>
            <person name="Harvey D.A."/>
            <person name="Heiman T.J."/>
            <person name="Hernandez J.R."/>
            <person name="Houck J."/>
            <person name="Hostin D."/>
            <person name="Houston K.A."/>
            <person name="Howland T.J."/>
            <person name="Wei M.-H."/>
            <person name="Ibegwam C."/>
            <person name="Jalali M."/>
            <person name="Kalush F."/>
            <person name="Karpen G.H."/>
            <person name="Ke Z."/>
            <person name="Kennison J.A."/>
            <person name="Ketchum K.A."/>
            <person name="Kimmel B.E."/>
            <person name="Kodira C.D."/>
            <person name="Kraft C.L."/>
            <person name="Kravitz S."/>
            <person name="Kulp D."/>
            <person name="Lai Z."/>
            <person name="Lasko P."/>
            <person name="Lei Y."/>
            <person name="Levitsky A.A."/>
            <person name="Li J.H."/>
            <person name="Li Z."/>
            <person name="Liang Y."/>
            <person name="Lin X."/>
            <person name="Liu X."/>
            <person name="Mattei B."/>
            <person name="McIntosh T.C."/>
            <person name="McLeod M.P."/>
            <person name="McPherson D."/>
            <person name="Merkulov G."/>
            <person name="Milshina N.V."/>
            <person name="Mobarry C."/>
            <person name="Morris J."/>
            <person name="Moshrefi A."/>
            <person name="Mount S.M."/>
            <person name="Moy M."/>
            <person name="Murphy B."/>
            <person name="Murphy L."/>
            <person name="Muzny D.M."/>
            <person name="Nelson D.L."/>
            <person name="Nelson D.R."/>
            <person name="Nelson K.A."/>
            <person name="Nixon K."/>
            <person name="Nusskern D.R."/>
            <person name="Pacleb J.M."/>
            <person name="Palazzolo M."/>
            <person name="Pittman G.S."/>
            <person name="Pan S."/>
            <person name="Pollard J."/>
            <person name="Puri V."/>
            <person name="Reese M.G."/>
            <person name="Reinert K."/>
            <person name="Remington K."/>
            <person name="Saunders R.D.C."/>
            <person name="Scheeler F."/>
            <person name="Shen H."/>
            <person name="Shue B.C."/>
            <person name="Siden-Kiamos I."/>
            <person name="Simpson M."/>
            <person name="Skupski M.P."/>
            <person name="Smith T.J."/>
            <person name="Spier E."/>
            <person name="Spradling A.C."/>
            <person name="Stapleton M."/>
            <person name="Strong R."/>
            <person name="Sun E."/>
            <person name="Svirskas R."/>
            <person name="Tector C."/>
            <person name="Turner R."/>
            <person name="Venter E."/>
            <person name="Wang A.H."/>
            <person name="Wang X."/>
            <person name="Wang Z.-Y."/>
            <person name="Wassarman D.A."/>
            <person name="Weinstock G.M."/>
            <person name="Weissenbach J."/>
            <person name="Williams S.M."/>
            <person name="Woodage T."/>
            <person name="Worley K.C."/>
            <person name="Wu D."/>
            <person name="Yang S."/>
            <person name="Yao Q.A."/>
            <person name="Ye J."/>
            <person name="Yeh R.-F."/>
            <person name="Zaveri J.S."/>
            <person name="Zhan M."/>
            <person name="Zhang G."/>
            <person name="Zhao Q."/>
            <person name="Zheng L."/>
            <person name="Zheng X.H."/>
            <person name="Zhong F.N."/>
            <person name="Zhong W."/>
            <person name="Zhou X."/>
            <person name="Zhu S.C."/>
            <person name="Zhu X."/>
            <person name="Smith H.O."/>
            <person name="Gibbs R.A."/>
            <person name="Myers E.W."/>
            <person name="Rubin G.M."/>
            <person name="Venter J.C."/>
        </authorList>
    </citation>
    <scope>NUCLEOTIDE SEQUENCE [LARGE SCALE GENOMIC DNA]</scope>
    <source>
        <strain>Berkeley</strain>
    </source>
</reference>
<reference key="3">
    <citation type="journal article" date="2002" name="Genome Biol.">
        <title>Annotation of the Drosophila melanogaster euchromatic genome: a systematic review.</title>
        <authorList>
            <person name="Misra S."/>
            <person name="Crosby M.A."/>
            <person name="Mungall C.J."/>
            <person name="Matthews B.B."/>
            <person name="Campbell K.S."/>
            <person name="Hradecky P."/>
            <person name="Huang Y."/>
            <person name="Kaminker J.S."/>
            <person name="Millburn G.H."/>
            <person name="Prochnik S.E."/>
            <person name="Smith C.D."/>
            <person name="Tupy J.L."/>
            <person name="Whitfield E.J."/>
            <person name="Bayraktaroglu L."/>
            <person name="Berman B.P."/>
            <person name="Bettencourt B.R."/>
            <person name="Celniker S.E."/>
            <person name="de Grey A.D.N.J."/>
            <person name="Drysdale R.A."/>
            <person name="Harris N.L."/>
            <person name="Richter J."/>
            <person name="Russo S."/>
            <person name="Schroeder A.J."/>
            <person name="Shu S.Q."/>
            <person name="Stapleton M."/>
            <person name="Yamada C."/>
            <person name="Ashburner M."/>
            <person name="Gelbart W.M."/>
            <person name="Rubin G.M."/>
            <person name="Lewis S.E."/>
        </authorList>
    </citation>
    <scope>GENOME REANNOTATION</scope>
    <source>
        <strain>Berkeley</strain>
    </source>
</reference>
<reference key="4">
    <citation type="journal article" date="2002" name="Genome Biol.">
        <title>A Drosophila full-length cDNA resource.</title>
        <authorList>
            <person name="Stapleton M."/>
            <person name="Carlson J.W."/>
            <person name="Brokstein P."/>
            <person name="Yu C."/>
            <person name="Champe M."/>
            <person name="George R.A."/>
            <person name="Guarin H."/>
            <person name="Kronmiller B."/>
            <person name="Pacleb J.M."/>
            <person name="Park S."/>
            <person name="Wan K.H."/>
            <person name="Rubin G.M."/>
            <person name="Celniker S.E."/>
        </authorList>
    </citation>
    <scope>NUCLEOTIDE SEQUENCE [LARGE SCALE MRNA]</scope>
    <source>
        <strain>Berkeley</strain>
        <tissue>Head</tissue>
    </source>
</reference>
<protein>
    <recommendedName>
        <fullName>Calbindin-32</fullName>
    </recommendedName>
</protein>
<name>CAB32_DROME</name>
<evidence type="ECO:0000255" key="1">
    <source>
        <dbReference type="PROSITE-ProRule" id="PRU00448"/>
    </source>
</evidence>
<evidence type="ECO:0000305" key="2"/>